<comment type="function">
    <text evidence="1">Nucleotide sugar hydrolase that catalyzes the fourth step in the biosynthesis of pseudaminic acid, a sialic-acid-like sugar that is used to modify flagellin. Mediates the removal of UDP from C-1 of UDP-2,4-diacetamido-2,4,6-trideoxy-beta-L-altropyranose forming 2,4-diacetamido-2,4,6-trideoxy-beta-L-altropyranose.</text>
</comment>
<comment type="catalytic activity">
    <reaction evidence="1">
        <text>UDP-2,4-diacetamido-2,4,6-trideoxy-beta-L-altrose + H2O = 2,4-diacetamido-2,4,6-trideoxy-beta-L-altrose + UDP + H(+)</text>
        <dbReference type="Rhea" id="RHEA:31803"/>
        <dbReference type="ChEBI" id="CHEBI:15377"/>
        <dbReference type="ChEBI" id="CHEBI:15378"/>
        <dbReference type="ChEBI" id="CHEBI:58223"/>
        <dbReference type="ChEBI" id="CHEBI:63283"/>
        <dbReference type="ChEBI" id="CHEBI:63417"/>
        <dbReference type="EC" id="3.6.1.57"/>
    </reaction>
</comment>
<comment type="biophysicochemical properties">
    <kinetics>
        <KM evidence="1">174 uM for UDP-2,4-diacetamido-2,4,6-trideoxy-beta-L-altropyranose</KM>
        <KM evidence="2">250 uM for UDP-2,4-diacetamido-2,4,6-trideoxy-beta-L-altropyranose</KM>
        <text evidence="1 2">kcat is 27 sec(-1) (PubMed:16728396). kcat is 25 sec(-1) (PubMed:19483088).</text>
    </kinetics>
</comment>
<comment type="subunit">
    <text evidence="2">Monomer.</text>
</comment>
<comment type="similarity">
    <text evidence="3">Belongs to the PseG family.</text>
</comment>
<gene>
    <name type="primary">pseG</name>
    <name type="ordered locus">Cj1312</name>
</gene>
<proteinExistence type="evidence at protein level"/>
<dbReference type="EC" id="3.6.1.57"/>
<dbReference type="EMBL" id="AL111168">
    <property type="protein sequence ID" value="CAL35426.1"/>
    <property type="molecule type" value="Genomic_DNA"/>
</dbReference>
<dbReference type="PIR" id="E81274">
    <property type="entry name" value="E81274"/>
</dbReference>
<dbReference type="RefSeq" id="WP_002830499.1">
    <property type="nucleotide sequence ID" value="NZ_SZUC01000001.1"/>
</dbReference>
<dbReference type="RefSeq" id="YP_002344702.1">
    <property type="nucleotide sequence ID" value="NC_002163.1"/>
</dbReference>
<dbReference type="PDB" id="3HBM">
    <property type="method" value="X-ray"/>
    <property type="resolution" value="1.80 A"/>
    <property type="chains" value="A=1-274"/>
</dbReference>
<dbReference type="PDB" id="3HBN">
    <property type="method" value="X-ray"/>
    <property type="resolution" value="1.85 A"/>
    <property type="chains" value="A=1-274"/>
</dbReference>
<dbReference type="PDBsum" id="3HBM"/>
<dbReference type="PDBsum" id="3HBN"/>
<dbReference type="SMR" id="Q0P8U5"/>
<dbReference type="IntAct" id="Q0P8U5">
    <property type="interactions" value="6"/>
</dbReference>
<dbReference type="STRING" id="192222.Cj1312"/>
<dbReference type="PaxDb" id="192222-Cj1312"/>
<dbReference type="EnsemblBacteria" id="CAL35426">
    <property type="protein sequence ID" value="CAL35426"/>
    <property type="gene ID" value="Cj1312"/>
</dbReference>
<dbReference type="GeneID" id="905604"/>
<dbReference type="KEGG" id="cje:Cj1312"/>
<dbReference type="PATRIC" id="fig|192222.6.peg.1294"/>
<dbReference type="eggNOG" id="COG3980">
    <property type="taxonomic scope" value="Bacteria"/>
</dbReference>
<dbReference type="HOGENOM" id="CLU_023406_0_0_7"/>
<dbReference type="OrthoDB" id="9788924at2"/>
<dbReference type="BRENDA" id="3.6.1.57">
    <property type="organism ID" value="1087"/>
</dbReference>
<dbReference type="EvolutionaryTrace" id="Q0P8U5"/>
<dbReference type="Proteomes" id="UP000000799">
    <property type="component" value="Chromosome"/>
</dbReference>
<dbReference type="GO" id="GO:0016787">
    <property type="term" value="F:hydrolase activity"/>
    <property type="evidence" value="ECO:0007669"/>
    <property type="project" value="UniProtKB-KW"/>
</dbReference>
<dbReference type="Gene3D" id="3.40.50.11190">
    <property type="match status" value="1"/>
</dbReference>
<dbReference type="Gene3D" id="3.40.50.2000">
    <property type="entry name" value="Glycogen Phosphorylase B"/>
    <property type="match status" value="1"/>
</dbReference>
<dbReference type="InterPro" id="IPR020023">
    <property type="entry name" value="PseG"/>
</dbReference>
<dbReference type="NCBIfam" id="TIGR03590">
    <property type="entry name" value="PseG"/>
    <property type="match status" value="1"/>
</dbReference>
<organism>
    <name type="scientific">Campylobacter jejuni subsp. jejuni serotype O:2 (strain ATCC 700819 / NCTC 11168)</name>
    <dbReference type="NCBI Taxonomy" id="192222"/>
    <lineage>
        <taxon>Bacteria</taxon>
        <taxon>Pseudomonadati</taxon>
        <taxon>Campylobacterota</taxon>
        <taxon>Epsilonproteobacteria</taxon>
        <taxon>Campylobacterales</taxon>
        <taxon>Campylobacteraceae</taxon>
        <taxon>Campylobacter</taxon>
    </lineage>
</organism>
<accession>Q0P8U5</accession>
<evidence type="ECO:0000269" key="1">
    <source>
    </source>
</evidence>
<evidence type="ECO:0000269" key="2">
    <source>
    </source>
</evidence>
<evidence type="ECO:0000305" key="3"/>
<evidence type="ECO:0007829" key="4">
    <source>
        <dbReference type="PDB" id="3HBM"/>
    </source>
</evidence>
<evidence type="ECO:0007829" key="5">
    <source>
        <dbReference type="PDB" id="3HBN"/>
    </source>
</evidence>
<name>PSEG_CAMJE</name>
<feature type="chain" id="PRO_0000418931" description="UDP-2,4-diacetamido-2,4,6-trideoxy-beta-L-altropyranose hydrolase">
    <location>
        <begin position="1"/>
        <end position="274"/>
    </location>
</feature>
<feature type="active site" description="Proton acceptor" evidence="2">
    <location>
        <position position="17"/>
    </location>
</feature>
<feature type="binding site">
    <location>
        <begin position="15"/>
        <end position="16"/>
    </location>
    <ligand>
        <name>substrate</name>
    </ligand>
</feature>
<feature type="binding site">
    <location>
        <position position="143"/>
    </location>
    <ligand>
        <name>substrate</name>
    </ligand>
</feature>
<feature type="binding site">
    <location>
        <begin position="234"/>
        <end position="235"/>
    </location>
    <ligand>
        <name>substrate</name>
    </ligand>
</feature>
<feature type="binding site">
    <location>
        <position position="239"/>
    </location>
    <ligand>
        <name>substrate</name>
    </ligand>
</feature>
<feature type="mutagenesis site" description="Abolishes catalytic activity." evidence="2">
    <original>H</original>
    <variation>F</variation>
    <variation>L</variation>
    <location>
        <position position="17"/>
    </location>
</feature>
<feature type="mutagenesis site" description="Strongly impaired catalytic activity." evidence="2">
    <original>H</original>
    <variation>N</variation>
    <location>
        <position position="17"/>
    </location>
</feature>
<feature type="mutagenesis site" description="Impaired catalytic activity." evidence="2">
    <original>Y</original>
    <variation>F</variation>
    <location>
        <position position="78"/>
    </location>
</feature>
<feature type="mutagenesis site" description="Impaired catalytic activity." evidence="2">
    <original>N</original>
    <variation>A</variation>
    <location>
        <position position="255"/>
    </location>
</feature>
<feature type="strand" evidence="4">
    <location>
        <begin position="3"/>
        <end position="6"/>
    </location>
</feature>
<feature type="turn" evidence="4">
    <location>
        <begin position="11"/>
        <end position="13"/>
    </location>
</feature>
<feature type="helix" evidence="4">
    <location>
        <begin position="16"/>
        <end position="25"/>
    </location>
</feature>
<feature type="strand" evidence="4">
    <location>
        <begin position="29"/>
        <end position="35"/>
    </location>
</feature>
<feature type="helix" evidence="4">
    <location>
        <begin position="43"/>
        <end position="45"/>
    </location>
</feature>
<feature type="strand" evidence="4">
    <location>
        <begin position="50"/>
        <end position="52"/>
    </location>
</feature>
<feature type="strand" evidence="4">
    <location>
        <begin position="54"/>
        <end position="56"/>
    </location>
</feature>
<feature type="helix" evidence="4">
    <location>
        <begin position="58"/>
        <end position="68"/>
    </location>
</feature>
<feature type="strand" evidence="4">
    <location>
        <begin position="71"/>
        <end position="75"/>
    </location>
</feature>
<feature type="helix" evidence="4">
    <location>
        <begin position="82"/>
        <end position="92"/>
    </location>
</feature>
<feature type="strand" evidence="4">
    <location>
        <begin position="95"/>
        <end position="99"/>
    </location>
</feature>
<feature type="strand" evidence="4">
    <location>
        <begin position="109"/>
        <end position="113"/>
    </location>
</feature>
<feature type="helix" evidence="4">
    <location>
        <begin position="120"/>
        <end position="123"/>
    </location>
</feature>
<feature type="turn" evidence="4">
    <location>
        <begin position="124"/>
        <end position="126"/>
    </location>
</feature>
<feature type="strand" evidence="4">
    <location>
        <begin position="132"/>
        <end position="136"/>
    </location>
</feature>
<feature type="helix" evidence="4">
    <location>
        <begin position="137"/>
        <end position="139"/>
    </location>
</feature>
<feature type="helix" evidence="4">
    <location>
        <begin position="144"/>
        <end position="149"/>
    </location>
</feature>
<feature type="strand" evidence="4">
    <location>
        <begin position="158"/>
        <end position="163"/>
    </location>
</feature>
<feature type="strand" evidence="5">
    <location>
        <begin position="165"/>
        <end position="167"/>
    </location>
</feature>
<feature type="helix" evidence="4">
    <location>
        <begin position="172"/>
        <end position="179"/>
    </location>
</feature>
<feature type="strand" evidence="4">
    <location>
        <begin position="186"/>
        <end position="190"/>
    </location>
</feature>
<feature type="helix" evidence="4">
    <location>
        <begin position="197"/>
        <end position="205"/>
    </location>
</feature>
<feature type="strand" evidence="4">
    <location>
        <begin position="208"/>
        <end position="215"/>
    </location>
</feature>
<feature type="helix" evidence="4">
    <location>
        <begin position="219"/>
        <end position="224"/>
    </location>
</feature>
<feature type="strand" evidence="4">
    <location>
        <begin position="226"/>
        <end position="234"/>
    </location>
</feature>
<feature type="helix" evidence="4">
    <location>
        <begin position="235"/>
        <end position="242"/>
    </location>
</feature>
<feature type="strand" evidence="4">
    <location>
        <begin position="247"/>
        <end position="250"/>
    </location>
</feature>
<feature type="helix" evidence="4">
    <location>
        <begin position="254"/>
        <end position="256"/>
    </location>
</feature>
<feature type="helix" evidence="4">
    <location>
        <begin position="257"/>
        <end position="265"/>
    </location>
</feature>
<feature type="strand" evidence="4">
    <location>
        <begin position="269"/>
        <end position="271"/>
    </location>
</feature>
<reference key="1">
    <citation type="journal article" date="2000" name="Nature">
        <title>The genome sequence of the food-borne pathogen Campylobacter jejuni reveals hypervariable sequences.</title>
        <authorList>
            <person name="Parkhill J."/>
            <person name="Wren B.W."/>
            <person name="Mungall K.L."/>
            <person name="Ketley J.M."/>
            <person name="Churcher C.M."/>
            <person name="Basham D."/>
            <person name="Chillingworth T."/>
            <person name="Davies R.M."/>
            <person name="Feltwell T."/>
            <person name="Holroyd S."/>
            <person name="Jagels K."/>
            <person name="Karlyshev A.V."/>
            <person name="Moule S."/>
            <person name="Pallen M.J."/>
            <person name="Penn C.W."/>
            <person name="Quail M.A."/>
            <person name="Rajandream M.A."/>
            <person name="Rutherford K.M."/>
            <person name="van Vliet A.H.M."/>
            <person name="Whitehead S."/>
            <person name="Barrell B.G."/>
        </authorList>
    </citation>
    <scope>NUCLEOTIDE SEQUENCE [LARGE SCALE GENOMIC DNA]</scope>
    <source>
        <strain>ATCC 700819 / NCTC 11168</strain>
    </source>
</reference>
<reference key="2">
    <citation type="journal article" date="2006" name="J. Biol. Chem.">
        <title>PseG of pseudaminic acid biosynthesis: a UDP-sugar hydrolase as a masked glycosyltransferase.</title>
        <authorList>
            <person name="Liu F."/>
            <person name="Tanner M.E."/>
        </authorList>
    </citation>
    <scope>FUNCTION</scope>
    <scope>CATALYTIC ACTIVITY</scope>
    <scope>BIOPHYSICOCHEMICAL PROPERTIES</scope>
    <source>
        <strain>ATCC 700819 / NCTC 11168</strain>
    </source>
</reference>
<reference key="3">
    <citation type="journal article" date="2009" name="J. Biol. Chem.">
        <title>Structural and functional analysis of Campylobacter jejuni PseG: a udp-sugar hydrolase from the pseudaminic acid biosynthetic pathway.</title>
        <authorList>
            <person name="Rangarajan E.S."/>
            <person name="Proteau A."/>
            <person name="Cui Q."/>
            <person name="Logan S.M."/>
            <person name="Potetinova Z."/>
            <person name="Whitfield D."/>
            <person name="Purisima E.O."/>
            <person name="Cygler M."/>
            <person name="Matte A."/>
            <person name="Sulea T."/>
            <person name="Schoenhofen I.C."/>
        </authorList>
    </citation>
    <scope>X-RAY CRYSTALLOGRAPHY (1.80 ANGSTROMS) IN COMPLEX WITH URIDINE-5'-DIPHOSPHATE</scope>
    <scope>ACTIVE SITE</scope>
    <scope>SUBUNIT</scope>
    <scope>BIOPHYSICOCHEMICAL PROPERTIES</scope>
    <scope>MUTAGENESIS OF HIS-17; TYR-78 AND ASN-255</scope>
    <source>
        <strain>ATCC 700819 / NCTC 11168</strain>
    </source>
</reference>
<keyword id="KW-0002">3D-structure</keyword>
<keyword id="KW-0378">Hydrolase</keyword>
<keyword id="KW-1185">Reference proteome</keyword>
<sequence>MKVLFRSDSSSQIGFGHIKRDLVLAKQYSDVSFACLPLEGSLIDEIPYPVYELSSESIYELINLIKEEKFELLIIDHYGISVDDEKLIKLETGVKILSFDDEIKPHHCDILLNVNAYAKASDYEGLVPFKCEVRCGFSYALIREEFYQEAKENREKKYDFFICMGGTDIKNLSLQIASELPKTKIISIATSSSNPNLKKLQKFAKLHNNIRLFIDHENIAKLMNESNKLIISASSLVNEALLLKANFKAICYVKNQESTATWLAKKGYEVEYKY</sequence>
<protein>
    <recommendedName>
        <fullName>UDP-2,4-diacetamido-2,4,6-trideoxy-beta-L-altropyranose hydrolase</fullName>
        <ecNumber>3.6.1.57</ecNumber>
    </recommendedName>
    <alternativeName>
        <fullName>Pseudaminic acid biosynthesis protein G</fullName>
    </alternativeName>
</protein>